<protein>
    <recommendedName>
        <fullName>Zinc finger CCCH domain-containing protein 15</fullName>
    </recommendedName>
</protein>
<proteinExistence type="evidence at transcript level"/>
<dbReference type="EMBL" id="CR762127">
    <property type="protein sequence ID" value="CAJ83795.1"/>
    <property type="molecule type" value="mRNA"/>
</dbReference>
<dbReference type="EMBL" id="BC135295">
    <property type="protein sequence ID" value="AAI35296.1"/>
    <property type="molecule type" value="mRNA"/>
</dbReference>
<dbReference type="RefSeq" id="NP_001016105.1">
    <property type="nucleotide sequence ID" value="NM_001016105.2"/>
</dbReference>
<dbReference type="FunCoup" id="A4IGY3">
    <property type="interactions" value="2936"/>
</dbReference>
<dbReference type="STRING" id="8364.ENSXETP00000021979"/>
<dbReference type="PaxDb" id="8364-ENSXETP00000029225"/>
<dbReference type="GeneID" id="548859"/>
<dbReference type="KEGG" id="xtr:548859"/>
<dbReference type="AGR" id="Xenbase:XB-GENE-5800360"/>
<dbReference type="CTD" id="55854"/>
<dbReference type="Xenbase" id="XB-GENE-5800360">
    <property type="gene designation" value="zc3h15"/>
</dbReference>
<dbReference type="eggNOG" id="KOG1763">
    <property type="taxonomic scope" value="Eukaryota"/>
</dbReference>
<dbReference type="HOGENOM" id="CLU_042870_3_0_1"/>
<dbReference type="InParanoid" id="A4IGY3"/>
<dbReference type="OrthoDB" id="278280at2759"/>
<dbReference type="TreeFam" id="TF300892"/>
<dbReference type="Reactome" id="R-XTR-9629569">
    <property type="pathway name" value="Protein hydroxylation"/>
</dbReference>
<dbReference type="Proteomes" id="UP000008143">
    <property type="component" value="Chromosome 9"/>
</dbReference>
<dbReference type="GO" id="GO:0005737">
    <property type="term" value="C:cytoplasm"/>
    <property type="evidence" value="ECO:0007669"/>
    <property type="project" value="UniProtKB-SubCell"/>
</dbReference>
<dbReference type="GO" id="GO:0005634">
    <property type="term" value="C:nucleus"/>
    <property type="evidence" value="ECO:0007669"/>
    <property type="project" value="UniProtKB-SubCell"/>
</dbReference>
<dbReference type="GO" id="GO:0008270">
    <property type="term" value="F:zinc ion binding"/>
    <property type="evidence" value="ECO:0007669"/>
    <property type="project" value="UniProtKB-KW"/>
</dbReference>
<dbReference type="FunFam" id="4.10.1000.10:FF:000050">
    <property type="entry name" value="AGAP008634-PA"/>
    <property type="match status" value="1"/>
</dbReference>
<dbReference type="Gene3D" id="6.20.400.10">
    <property type="match status" value="1"/>
</dbReference>
<dbReference type="Gene3D" id="4.10.1000.10">
    <property type="entry name" value="Zinc finger, CCCH-type"/>
    <property type="match status" value="1"/>
</dbReference>
<dbReference type="InterPro" id="IPR032378">
    <property type="entry name" value="ZC3H15/TMA46_C"/>
</dbReference>
<dbReference type="InterPro" id="IPR000571">
    <property type="entry name" value="Znf_CCCH"/>
</dbReference>
<dbReference type="InterPro" id="IPR036855">
    <property type="entry name" value="Znf_CCCH_sf"/>
</dbReference>
<dbReference type="PANTHER" id="PTHR12681:SF0">
    <property type="entry name" value="ZINC FINGER CCCH DOMAIN-CONTAINING PROTEIN 15"/>
    <property type="match status" value="1"/>
</dbReference>
<dbReference type="PANTHER" id="PTHR12681">
    <property type="entry name" value="ZINC FINGER-CONTAINING PROTEIN P48ZNF"/>
    <property type="match status" value="1"/>
</dbReference>
<dbReference type="Pfam" id="PF16543">
    <property type="entry name" value="DFRP_C"/>
    <property type="match status" value="1"/>
</dbReference>
<dbReference type="Pfam" id="PF00642">
    <property type="entry name" value="zf-CCCH"/>
    <property type="match status" value="1"/>
</dbReference>
<dbReference type="SMART" id="SM00356">
    <property type="entry name" value="ZnF_C3H1"/>
    <property type="match status" value="2"/>
</dbReference>
<dbReference type="SUPFAM" id="SSF90229">
    <property type="entry name" value="CCCH zinc finger"/>
    <property type="match status" value="1"/>
</dbReference>
<dbReference type="PROSITE" id="PS50103">
    <property type="entry name" value="ZF_C3H1"/>
    <property type="match status" value="2"/>
</dbReference>
<sequence>MPPKKAPAAPQSGKKTEQKKKEKIIEDKTFGLKNKKGAKQQKFIKNVIHQVKFGQQNPRLVAQAEGEKKTKKDDKKKELLELNDLFKPVVAAQKVSKGADPKSVVCAFYKQGQCTKGDKCKFSHDLSLERKCEKRSVYVDGRDEELEKDTMENWDEKKLEEVVNKKHGEAEKIKPKTQIVCKFFLEAIENNKYGWFWVCPGGGDMCMYRHALPPGFVLKKDKKKEEKDEEISLEDLIERERAGLGLNVTRITLESFLEWKKRKRQDRIVKLEEEMEKRKADFKAGKSLGISGREVFEFRPELINDDDEEADDTDYIFDKEDSDSETADDIKDIDLSRFVLKDVDETGITVASCERFSSYVISTEKDEEKLCVASGGEMENEDQSEEQQENDLENGFVDAVPVDENLFTGEDMDELEEELYTLDLEK</sequence>
<name>ZC3HF_XENTR</name>
<keyword id="KW-0175">Coiled coil</keyword>
<keyword id="KW-0963">Cytoplasm</keyword>
<keyword id="KW-0479">Metal-binding</keyword>
<keyword id="KW-0539">Nucleus</keyword>
<keyword id="KW-1185">Reference proteome</keyword>
<keyword id="KW-0677">Repeat</keyword>
<keyword id="KW-0862">Zinc</keyword>
<keyword id="KW-0863">Zinc-finger</keyword>
<accession>A4IGY3</accession>
<accession>Q28F75</accession>
<comment type="function">
    <text evidence="1">Protects drg1 from proteolytic degradation.</text>
</comment>
<comment type="subunit">
    <text evidence="1">Interacts with drg1.</text>
</comment>
<comment type="subcellular location">
    <subcellularLocation>
        <location evidence="1">Cytoplasm</location>
    </subcellularLocation>
    <subcellularLocation>
        <location evidence="1">Nucleus</location>
    </subcellularLocation>
</comment>
<comment type="similarity">
    <text evidence="5">Belongs to the ZC3H15/TMA46 family.</text>
</comment>
<reference key="1">
    <citation type="submission" date="2006-10" db="EMBL/GenBank/DDBJ databases">
        <authorList>
            <consortium name="Sanger Xenopus tropicalis EST/cDNA project"/>
        </authorList>
    </citation>
    <scope>NUCLEOTIDE SEQUENCE [LARGE SCALE MRNA]</scope>
    <source>
        <tissue>Gastrula</tissue>
    </source>
</reference>
<reference key="2">
    <citation type="submission" date="2007-03" db="EMBL/GenBank/DDBJ databases">
        <authorList>
            <consortium name="NIH - Xenopus Gene Collection (XGC) project"/>
        </authorList>
    </citation>
    <scope>NUCLEOTIDE SEQUENCE [LARGE SCALE MRNA]</scope>
    <source>
        <tissue>Embryo</tissue>
    </source>
</reference>
<feature type="chain" id="PRO_0000324648" description="Zinc finger CCCH domain-containing protein 15">
    <location>
        <begin position="1"/>
        <end position="426"/>
    </location>
</feature>
<feature type="zinc finger region" description="C3H1-type 1" evidence="3">
    <location>
        <begin position="100"/>
        <end position="127"/>
    </location>
</feature>
<feature type="zinc finger region" description="C3H1-type 2" evidence="3">
    <location>
        <begin position="175"/>
        <end position="213"/>
    </location>
</feature>
<feature type="region of interest" description="Disordered" evidence="4">
    <location>
        <begin position="1"/>
        <end position="28"/>
    </location>
</feature>
<feature type="region of interest" description="Required for interaction with DRG1" evidence="1">
    <location>
        <begin position="237"/>
        <end position="261"/>
    </location>
</feature>
<feature type="region of interest" description="Disordered" evidence="4">
    <location>
        <begin position="374"/>
        <end position="394"/>
    </location>
</feature>
<feature type="coiled-coil region" evidence="2">
    <location>
        <begin position="219"/>
        <end position="283"/>
    </location>
</feature>
<feature type="compositionally biased region" description="Basic and acidic residues" evidence="4">
    <location>
        <begin position="14"/>
        <end position="28"/>
    </location>
</feature>
<feature type="compositionally biased region" description="Acidic residues" evidence="4">
    <location>
        <begin position="378"/>
        <end position="392"/>
    </location>
</feature>
<feature type="sequence conflict" description="In Ref. 1; CAJ83795." evidence="5" ref="1">
    <original>I</original>
    <variation>T</variation>
    <location>
        <position position="48"/>
    </location>
</feature>
<gene>
    <name type="primary">zc3h15</name>
    <name type="ORF">TGas113m05.1</name>
</gene>
<evidence type="ECO:0000250" key="1"/>
<evidence type="ECO:0000255" key="2"/>
<evidence type="ECO:0000255" key="3">
    <source>
        <dbReference type="PROSITE-ProRule" id="PRU00723"/>
    </source>
</evidence>
<evidence type="ECO:0000256" key="4">
    <source>
        <dbReference type="SAM" id="MobiDB-lite"/>
    </source>
</evidence>
<evidence type="ECO:0000305" key="5"/>
<organism>
    <name type="scientific">Xenopus tropicalis</name>
    <name type="common">Western clawed frog</name>
    <name type="synonym">Silurana tropicalis</name>
    <dbReference type="NCBI Taxonomy" id="8364"/>
    <lineage>
        <taxon>Eukaryota</taxon>
        <taxon>Metazoa</taxon>
        <taxon>Chordata</taxon>
        <taxon>Craniata</taxon>
        <taxon>Vertebrata</taxon>
        <taxon>Euteleostomi</taxon>
        <taxon>Amphibia</taxon>
        <taxon>Batrachia</taxon>
        <taxon>Anura</taxon>
        <taxon>Pipoidea</taxon>
        <taxon>Pipidae</taxon>
        <taxon>Xenopodinae</taxon>
        <taxon>Xenopus</taxon>
        <taxon>Silurana</taxon>
    </lineage>
</organism>